<dbReference type="EMBL" id="BX897699">
    <property type="protein sequence ID" value="CAF27828.1"/>
    <property type="molecule type" value="Genomic_DNA"/>
</dbReference>
<dbReference type="RefSeq" id="WP_011180900.1">
    <property type="nucleotide sequence ID" value="NZ_LRIJ02000001.1"/>
</dbReference>
<dbReference type="SMR" id="Q6G2X9"/>
<dbReference type="PaxDb" id="283166-BH10370"/>
<dbReference type="EnsemblBacteria" id="CAF27828">
    <property type="protein sequence ID" value="CAF27828"/>
    <property type="gene ID" value="BH10370"/>
</dbReference>
<dbReference type="GeneID" id="92985277"/>
<dbReference type="KEGG" id="bhe:BH10370"/>
<dbReference type="eggNOG" id="COG0096">
    <property type="taxonomic scope" value="Bacteria"/>
</dbReference>
<dbReference type="OrthoDB" id="9802617at2"/>
<dbReference type="Proteomes" id="UP000000421">
    <property type="component" value="Chromosome"/>
</dbReference>
<dbReference type="GO" id="GO:1990904">
    <property type="term" value="C:ribonucleoprotein complex"/>
    <property type="evidence" value="ECO:0007669"/>
    <property type="project" value="UniProtKB-KW"/>
</dbReference>
<dbReference type="GO" id="GO:0005840">
    <property type="term" value="C:ribosome"/>
    <property type="evidence" value="ECO:0007669"/>
    <property type="project" value="UniProtKB-KW"/>
</dbReference>
<dbReference type="GO" id="GO:0019843">
    <property type="term" value="F:rRNA binding"/>
    <property type="evidence" value="ECO:0007669"/>
    <property type="project" value="UniProtKB-UniRule"/>
</dbReference>
<dbReference type="GO" id="GO:0003735">
    <property type="term" value="F:structural constituent of ribosome"/>
    <property type="evidence" value="ECO:0007669"/>
    <property type="project" value="InterPro"/>
</dbReference>
<dbReference type="GO" id="GO:0006412">
    <property type="term" value="P:translation"/>
    <property type="evidence" value="ECO:0007669"/>
    <property type="project" value="UniProtKB-UniRule"/>
</dbReference>
<dbReference type="FunFam" id="3.30.1370.30:FF:000002">
    <property type="entry name" value="30S ribosomal protein S8"/>
    <property type="match status" value="1"/>
</dbReference>
<dbReference type="FunFam" id="3.30.1490.10:FF:000001">
    <property type="entry name" value="30S ribosomal protein S8"/>
    <property type="match status" value="1"/>
</dbReference>
<dbReference type="Gene3D" id="3.30.1370.30">
    <property type="match status" value="1"/>
</dbReference>
<dbReference type="Gene3D" id="3.30.1490.10">
    <property type="match status" value="1"/>
</dbReference>
<dbReference type="HAMAP" id="MF_01302_B">
    <property type="entry name" value="Ribosomal_uS8_B"/>
    <property type="match status" value="1"/>
</dbReference>
<dbReference type="InterPro" id="IPR000630">
    <property type="entry name" value="Ribosomal_uS8"/>
</dbReference>
<dbReference type="InterPro" id="IPR047863">
    <property type="entry name" value="Ribosomal_uS8_CS"/>
</dbReference>
<dbReference type="InterPro" id="IPR035987">
    <property type="entry name" value="Ribosomal_uS8_sf"/>
</dbReference>
<dbReference type="NCBIfam" id="NF001109">
    <property type="entry name" value="PRK00136.1"/>
    <property type="match status" value="1"/>
</dbReference>
<dbReference type="PANTHER" id="PTHR11758">
    <property type="entry name" value="40S RIBOSOMAL PROTEIN S15A"/>
    <property type="match status" value="1"/>
</dbReference>
<dbReference type="Pfam" id="PF00410">
    <property type="entry name" value="Ribosomal_S8"/>
    <property type="match status" value="1"/>
</dbReference>
<dbReference type="SUPFAM" id="SSF56047">
    <property type="entry name" value="Ribosomal protein S8"/>
    <property type="match status" value="1"/>
</dbReference>
<dbReference type="PROSITE" id="PS00053">
    <property type="entry name" value="RIBOSOMAL_S8"/>
    <property type="match status" value="1"/>
</dbReference>
<keyword id="KW-0687">Ribonucleoprotein</keyword>
<keyword id="KW-0689">Ribosomal protein</keyword>
<keyword id="KW-0694">RNA-binding</keyword>
<keyword id="KW-0699">rRNA-binding</keyword>
<accession>Q6G2X9</accession>
<protein>
    <recommendedName>
        <fullName evidence="1">Small ribosomal subunit protein uS8</fullName>
    </recommendedName>
    <alternativeName>
        <fullName evidence="2">30S ribosomal protein S8</fullName>
    </alternativeName>
</protein>
<organism>
    <name type="scientific">Bartonella henselae (strain ATCC 49882 / DSM 28221 / CCUG 30454 / Houston 1)</name>
    <name type="common">Rochalimaea henselae</name>
    <dbReference type="NCBI Taxonomy" id="283166"/>
    <lineage>
        <taxon>Bacteria</taxon>
        <taxon>Pseudomonadati</taxon>
        <taxon>Pseudomonadota</taxon>
        <taxon>Alphaproteobacteria</taxon>
        <taxon>Hyphomicrobiales</taxon>
        <taxon>Bartonellaceae</taxon>
        <taxon>Bartonella</taxon>
    </lineage>
</organism>
<feature type="chain" id="PRO_0000126369" description="Small ribosomal subunit protein uS8">
    <location>
        <begin position="1"/>
        <end position="132"/>
    </location>
</feature>
<proteinExistence type="inferred from homology"/>
<evidence type="ECO:0000255" key="1">
    <source>
        <dbReference type="HAMAP-Rule" id="MF_01302"/>
    </source>
</evidence>
<evidence type="ECO:0000305" key="2"/>
<name>RS8_BARHE</name>
<gene>
    <name evidence="1" type="primary">rpsH</name>
    <name type="ordered locus">BH10370</name>
</gene>
<comment type="function">
    <text evidence="1">One of the primary rRNA binding proteins, it binds directly to 16S rRNA central domain where it helps coordinate assembly of the platform of the 30S subunit.</text>
</comment>
<comment type="subunit">
    <text evidence="1">Part of the 30S ribosomal subunit. Contacts proteins S5 and S12.</text>
</comment>
<comment type="similarity">
    <text evidence="1">Belongs to the universal ribosomal protein uS8 family.</text>
</comment>
<sequence length="132" mass="14492">MSMSDPLGDMLTRIRNALARKKGKVVTPASKLRARVLDVLQSEGYIRGYNQVDLGDGKSEIEIELKYFEGLAAIREISRVSKPGRRVYVSAKSIPHVANGLGISILSTPKGVMADYEARKQNVGGELLCRVF</sequence>
<reference key="1">
    <citation type="journal article" date="2004" name="Proc. Natl. Acad. Sci. U.S.A.">
        <title>The louse-borne human pathogen Bartonella quintana is a genomic derivative of the zoonotic agent Bartonella henselae.</title>
        <authorList>
            <person name="Alsmark U.C.M."/>
            <person name="Frank A.C."/>
            <person name="Karlberg E.O."/>
            <person name="Legault B.-A."/>
            <person name="Ardell D.H."/>
            <person name="Canbaeck B."/>
            <person name="Eriksson A.-S."/>
            <person name="Naeslund A.K."/>
            <person name="Handley S.A."/>
            <person name="Huvet M."/>
            <person name="La Scola B."/>
            <person name="Holmberg M."/>
            <person name="Andersson S.G.E."/>
        </authorList>
    </citation>
    <scope>NUCLEOTIDE SEQUENCE [LARGE SCALE GENOMIC DNA]</scope>
    <source>
        <strain>ATCC 49882 / DSM 28221 / CCUG 30454 / Houston 1</strain>
    </source>
</reference>